<organism>
    <name type="scientific">Homo sapiens</name>
    <name type="common">Human</name>
    <dbReference type="NCBI Taxonomy" id="9606"/>
    <lineage>
        <taxon>Eukaryota</taxon>
        <taxon>Metazoa</taxon>
        <taxon>Chordata</taxon>
        <taxon>Craniata</taxon>
        <taxon>Vertebrata</taxon>
        <taxon>Euteleostomi</taxon>
        <taxon>Mammalia</taxon>
        <taxon>Eutheria</taxon>
        <taxon>Euarchontoglires</taxon>
        <taxon>Primates</taxon>
        <taxon>Haplorrhini</taxon>
        <taxon>Catarrhini</taxon>
        <taxon>Hominidae</taxon>
        <taxon>Homo</taxon>
    </lineage>
</organism>
<feature type="chain" id="PRO_0000089821" description="Uncharacterized protein IDI2-AS1">
    <location>
        <begin position="1"/>
        <end position="188"/>
    </location>
</feature>
<reference key="1">
    <citation type="journal article" date="2000" name="Proc. Natl. Acad. Sci. U.S.A.">
        <title>Gene expression profiling in the human hypothalamus-pituitary-adrenal axis and full-length cDNA cloning.</title>
        <authorList>
            <person name="Hu R.-M."/>
            <person name="Han Z.-G."/>
            <person name="Song H.-D."/>
            <person name="Peng Y.-D."/>
            <person name="Huang Q.-H."/>
            <person name="Ren S.-X."/>
            <person name="Gu Y.-J."/>
            <person name="Huang C.-H."/>
            <person name="Li Y.-B."/>
            <person name="Jiang C.-L."/>
            <person name="Fu G."/>
            <person name="Zhang Q.-H."/>
            <person name="Gu B.-W."/>
            <person name="Dai M."/>
            <person name="Mao Y.-F."/>
            <person name="Gao G.-F."/>
            <person name="Rong R."/>
            <person name="Ye M."/>
            <person name="Zhou J."/>
            <person name="Xu S.-H."/>
            <person name="Gu J."/>
            <person name="Shi J.-X."/>
            <person name="Jin W.-R."/>
            <person name="Zhang C.-K."/>
            <person name="Wu T.-M."/>
            <person name="Huang G.-Y."/>
            <person name="Chen Z."/>
            <person name="Chen M.-D."/>
            <person name="Chen J.-L."/>
        </authorList>
    </citation>
    <scope>NUCLEOTIDE SEQUENCE [LARGE SCALE MRNA]</scope>
    <source>
        <tissue>Hypothalamus</tissue>
    </source>
</reference>
<reference key="2">
    <citation type="journal article" date="2004" name="Nature">
        <title>The DNA sequence and comparative analysis of human chromosome 10.</title>
        <authorList>
            <person name="Deloukas P."/>
            <person name="Earthrowl M.E."/>
            <person name="Grafham D.V."/>
            <person name="Rubenfield M."/>
            <person name="French L."/>
            <person name="Steward C.A."/>
            <person name="Sims S.K."/>
            <person name="Jones M.C."/>
            <person name="Searle S."/>
            <person name="Scott C."/>
            <person name="Howe K."/>
            <person name="Hunt S.E."/>
            <person name="Andrews T.D."/>
            <person name="Gilbert J.G.R."/>
            <person name="Swarbreck D."/>
            <person name="Ashurst J.L."/>
            <person name="Taylor A."/>
            <person name="Battles J."/>
            <person name="Bird C.P."/>
            <person name="Ainscough R."/>
            <person name="Almeida J.P."/>
            <person name="Ashwell R.I.S."/>
            <person name="Ambrose K.D."/>
            <person name="Babbage A.K."/>
            <person name="Bagguley C.L."/>
            <person name="Bailey J."/>
            <person name="Banerjee R."/>
            <person name="Bates K."/>
            <person name="Beasley H."/>
            <person name="Bray-Allen S."/>
            <person name="Brown A.J."/>
            <person name="Brown J.Y."/>
            <person name="Burford D.C."/>
            <person name="Burrill W."/>
            <person name="Burton J."/>
            <person name="Cahill P."/>
            <person name="Camire D."/>
            <person name="Carter N.P."/>
            <person name="Chapman J.C."/>
            <person name="Clark S.Y."/>
            <person name="Clarke G."/>
            <person name="Clee C.M."/>
            <person name="Clegg S."/>
            <person name="Corby N."/>
            <person name="Coulson A."/>
            <person name="Dhami P."/>
            <person name="Dutta I."/>
            <person name="Dunn M."/>
            <person name="Faulkner L."/>
            <person name="Frankish A."/>
            <person name="Frankland J.A."/>
            <person name="Garner P."/>
            <person name="Garnett J."/>
            <person name="Gribble S."/>
            <person name="Griffiths C."/>
            <person name="Grocock R."/>
            <person name="Gustafson E."/>
            <person name="Hammond S."/>
            <person name="Harley J.L."/>
            <person name="Hart E."/>
            <person name="Heath P.D."/>
            <person name="Ho T.P."/>
            <person name="Hopkins B."/>
            <person name="Horne J."/>
            <person name="Howden P.J."/>
            <person name="Huckle E."/>
            <person name="Hynds C."/>
            <person name="Johnson C."/>
            <person name="Johnson D."/>
            <person name="Kana A."/>
            <person name="Kay M."/>
            <person name="Kimberley A.M."/>
            <person name="Kershaw J.K."/>
            <person name="Kokkinaki M."/>
            <person name="Laird G.K."/>
            <person name="Lawlor S."/>
            <person name="Lee H.M."/>
            <person name="Leongamornlert D.A."/>
            <person name="Laird G."/>
            <person name="Lloyd C."/>
            <person name="Lloyd D.M."/>
            <person name="Loveland J."/>
            <person name="Lovell J."/>
            <person name="McLaren S."/>
            <person name="McLay K.E."/>
            <person name="McMurray A."/>
            <person name="Mashreghi-Mohammadi M."/>
            <person name="Matthews L."/>
            <person name="Milne S."/>
            <person name="Nickerson T."/>
            <person name="Nguyen M."/>
            <person name="Overton-Larty E."/>
            <person name="Palmer S.A."/>
            <person name="Pearce A.V."/>
            <person name="Peck A.I."/>
            <person name="Pelan S."/>
            <person name="Phillimore B."/>
            <person name="Porter K."/>
            <person name="Rice C.M."/>
            <person name="Rogosin A."/>
            <person name="Ross M.T."/>
            <person name="Sarafidou T."/>
            <person name="Sehra H.K."/>
            <person name="Shownkeen R."/>
            <person name="Skuce C.D."/>
            <person name="Smith M."/>
            <person name="Standring L."/>
            <person name="Sycamore N."/>
            <person name="Tester J."/>
            <person name="Thorpe A."/>
            <person name="Torcasso W."/>
            <person name="Tracey A."/>
            <person name="Tromans A."/>
            <person name="Tsolas J."/>
            <person name="Wall M."/>
            <person name="Walsh J."/>
            <person name="Wang H."/>
            <person name="Weinstock K."/>
            <person name="West A.P."/>
            <person name="Willey D.L."/>
            <person name="Whitehead S.L."/>
            <person name="Wilming L."/>
            <person name="Wray P.W."/>
            <person name="Young L."/>
            <person name="Chen Y."/>
            <person name="Lovering R.C."/>
            <person name="Moschonas N.K."/>
            <person name="Siebert R."/>
            <person name="Fechtel K."/>
            <person name="Bentley D."/>
            <person name="Durbin R.M."/>
            <person name="Hubbard T."/>
            <person name="Doucette-Stamm L."/>
            <person name="Beck S."/>
            <person name="Smith D.R."/>
            <person name="Rogers J."/>
        </authorList>
    </citation>
    <scope>NUCLEOTIDE SEQUENCE [LARGE SCALE GENOMIC DNA]</scope>
</reference>
<keyword id="KW-1185">Reference proteome</keyword>
<gene>
    <name type="primary">IDI2-AS1</name>
    <name type="synonym">C10orf110</name>
    <name type="ORF">HT009</name>
</gene>
<protein>
    <recommendedName>
        <fullName>Uncharacterized protein IDI2-AS1</fullName>
    </recommendedName>
    <alternativeName>
        <fullName>IDI2 antisense RNA 1</fullName>
    </alternativeName>
    <alternativeName>
        <fullName>IDI2 antisense gene protein 1</fullName>
    </alternativeName>
</protein>
<accession>Q9NZ38</accession>
<name>IDAS1_HUMAN</name>
<dbReference type="EMBL" id="AF220183">
    <property type="protein sequence ID" value="AAF67648.1"/>
    <property type="molecule type" value="mRNA"/>
</dbReference>
<dbReference type="EMBL" id="AC022536">
    <property type="status" value="NOT_ANNOTATED_CDS"/>
    <property type="molecule type" value="Genomic_DNA"/>
</dbReference>
<dbReference type="IntAct" id="Q9NZ38">
    <property type="interactions" value="1"/>
</dbReference>
<dbReference type="iPTMnet" id="Q9NZ38"/>
<dbReference type="BioMuta" id="HGNC:30885"/>
<dbReference type="AGR" id="HGNC:30885"/>
<dbReference type="GeneCards" id="IDI2-AS1"/>
<dbReference type="HGNC" id="HGNC:30885">
    <property type="gene designation" value="IDI2-AS1"/>
</dbReference>
<dbReference type="neXtProt" id="NX_Q9NZ38"/>
<dbReference type="InParanoid" id="Q9NZ38"/>
<dbReference type="PAN-GO" id="Q9NZ38">
    <property type="GO annotations" value="0 GO annotations based on evolutionary models"/>
</dbReference>
<dbReference type="PathwayCommons" id="Q9NZ38"/>
<dbReference type="SignaLink" id="Q9NZ38"/>
<dbReference type="ChiTaRS" id="IDI2-AS1">
    <property type="organism name" value="human"/>
</dbReference>
<dbReference type="Pharos" id="Q9NZ38">
    <property type="development level" value="Tdark"/>
</dbReference>
<dbReference type="PRO" id="PR:Q9NZ38"/>
<dbReference type="Proteomes" id="UP000005640">
    <property type="component" value="Unplaced"/>
</dbReference>
<dbReference type="RNAct" id="Q9NZ38">
    <property type="molecule type" value="protein"/>
</dbReference>
<proteinExistence type="evidence at transcript level"/>
<sequence length="188" mass="21312">MAFPGQSDTKMQWPEVPALPLLSSLCMAMVRKSSALGKEVGRRSEGNGDAGGPFPAVKFPIKDIQFSESGEGTRFLHGARLSPLSRNIKARLLLYVRASPLFYESRITLKKPSNRHEVKRNRCNRKTAKQMLMTTLFNELEPTRKYGITEDCTSLNRVLFSANRKCLHKSLYKKDCFKAAPFSMFSFR</sequence>